<comment type="similarity">
    <text evidence="2">Belongs to the universal ribosomal protein uL24 family.</text>
</comment>
<protein>
    <recommendedName>
        <fullName evidence="2">Large ribosomal subunit protein uL24</fullName>
    </recommendedName>
    <alternativeName>
        <fullName>60S ribosomal protein L26</fullName>
    </alternativeName>
</protein>
<name>RL26_DICDI</name>
<reference key="1">
    <citation type="journal article" date="2005" name="Nature">
        <title>The genome of the social amoeba Dictyostelium discoideum.</title>
        <authorList>
            <person name="Eichinger L."/>
            <person name="Pachebat J.A."/>
            <person name="Gloeckner G."/>
            <person name="Rajandream M.A."/>
            <person name="Sucgang R."/>
            <person name="Berriman M."/>
            <person name="Song J."/>
            <person name="Olsen R."/>
            <person name="Szafranski K."/>
            <person name="Xu Q."/>
            <person name="Tunggal B."/>
            <person name="Kummerfeld S."/>
            <person name="Madera M."/>
            <person name="Konfortov B.A."/>
            <person name="Rivero F."/>
            <person name="Bankier A.T."/>
            <person name="Lehmann R."/>
            <person name="Hamlin N."/>
            <person name="Davies R."/>
            <person name="Gaudet P."/>
            <person name="Fey P."/>
            <person name="Pilcher K."/>
            <person name="Chen G."/>
            <person name="Saunders D."/>
            <person name="Sodergren E.J."/>
            <person name="Davis P."/>
            <person name="Kerhornou A."/>
            <person name="Nie X."/>
            <person name="Hall N."/>
            <person name="Anjard C."/>
            <person name="Hemphill L."/>
            <person name="Bason N."/>
            <person name="Farbrother P."/>
            <person name="Desany B."/>
            <person name="Just E."/>
            <person name="Morio T."/>
            <person name="Rost R."/>
            <person name="Churcher C.M."/>
            <person name="Cooper J."/>
            <person name="Haydock S."/>
            <person name="van Driessche N."/>
            <person name="Cronin A."/>
            <person name="Goodhead I."/>
            <person name="Muzny D.M."/>
            <person name="Mourier T."/>
            <person name="Pain A."/>
            <person name="Lu M."/>
            <person name="Harper D."/>
            <person name="Lindsay R."/>
            <person name="Hauser H."/>
            <person name="James K.D."/>
            <person name="Quiles M."/>
            <person name="Madan Babu M."/>
            <person name="Saito T."/>
            <person name="Buchrieser C."/>
            <person name="Wardroper A."/>
            <person name="Felder M."/>
            <person name="Thangavelu M."/>
            <person name="Johnson D."/>
            <person name="Knights A."/>
            <person name="Loulseged H."/>
            <person name="Mungall K.L."/>
            <person name="Oliver K."/>
            <person name="Price C."/>
            <person name="Quail M.A."/>
            <person name="Urushihara H."/>
            <person name="Hernandez J."/>
            <person name="Rabbinowitsch E."/>
            <person name="Steffen D."/>
            <person name="Sanders M."/>
            <person name="Ma J."/>
            <person name="Kohara Y."/>
            <person name="Sharp S."/>
            <person name="Simmonds M.N."/>
            <person name="Spiegler S."/>
            <person name="Tivey A."/>
            <person name="Sugano S."/>
            <person name="White B."/>
            <person name="Walker D."/>
            <person name="Woodward J.R."/>
            <person name="Winckler T."/>
            <person name="Tanaka Y."/>
            <person name="Shaulsky G."/>
            <person name="Schleicher M."/>
            <person name="Weinstock G.M."/>
            <person name="Rosenthal A."/>
            <person name="Cox E.C."/>
            <person name="Chisholm R.L."/>
            <person name="Gibbs R.A."/>
            <person name="Loomis W.F."/>
            <person name="Platzer M."/>
            <person name="Kay R.R."/>
            <person name="Williams J.G."/>
            <person name="Dear P.H."/>
            <person name="Noegel A.A."/>
            <person name="Barrell B.G."/>
            <person name="Kuspa A."/>
        </authorList>
    </citation>
    <scope>NUCLEOTIDE SEQUENCE [LARGE SCALE GENOMIC DNA]</scope>
    <source>
        <strain>AX4</strain>
    </source>
</reference>
<proteinExistence type="inferred from homology"/>
<accession>Q54QM8</accession>
<gene>
    <name type="primary">rpl26</name>
    <name type="ORF">DDB_G0283741</name>
</gene>
<organism>
    <name type="scientific">Dictyostelium discoideum</name>
    <name type="common">Social amoeba</name>
    <dbReference type="NCBI Taxonomy" id="44689"/>
    <lineage>
        <taxon>Eukaryota</taxon>
        <taxon>Amoebozoa</taxon>
        <taxon>Evosea</taxon>
        <taxon>Eumycetozoa</taxon>
        <taxon>Dictyostelia</taxon>
        <taxon>Dictyosteliales</taxon>
        <taxon>Dictyosteliaceae</taxon>
        <taxon>Dictyostelium</taxon>
    </lineage>
</organism>
<feature type="chain" id="PRO_0000319549" description="Large ribosomal subunit protein uL24">
    <location>
        <begin position="1"/>
        <end position="139"/>
    </location>
</feature>
<feature type="region of interest" description="Disordered" evidence="1">
    <location>
        <begin position="1"/>
        <end position="25"/>
    </location>
</feature>
<dbReference type="EMBL" id="AAFI02000056">
    <property type="protein sequence ID" value="EAL65637.1"/>
    <property type="molecule type" value="Genomic_DNA"/>
</dbReference>
<dbReference type="RefSeq" id="XP_638995.1">
    <property type="nucleotide sequence ID" value="XM_633903.1"/>
</dbReference>
<dbReference type="SMR" id="Q54QM8"/>
<dbReference type="FunCoup" id="Q54QM8">
    <property type="interactions" value="617"/>
</dbReference>
<dbReference type="STRING" id="44689.Q54QM8"/>
<dbReference type="PaxDb" id="44689-DDB0230152"/>
<dbReference type="EnsemblProtists" id="EAL65637">
    <property type="protein sequence ID" value="EAL65637"/>
    <property type="gene ID" value="DDB_G0283741"/>
</dbReference>
<dbReference type="GeneID" id="8624241"/>
<dbReference type="KEGG" id="ddi:DDB_G0283741"/>
<dbReference type="dictyBase" id="DDB_G0283741">
    <property type="gene designation" value="rpl26"/>
</dbReference>
<dbReference type="VEuPathDB" id="AmoebaDB:DDB_G0283741"/>
<dbReference type="eggNOG" id="KOG3401">
    <property type="taxonomic scope" value="Eukaryota"/>
</dbReference>
<dbReference type="HOGENOM" id="CLU_093240_0_1_1"/>
<dbReference type="InParanoid" id="Q54QM8"/>
<dbReference type="OMA" id="VRIMRGD"/>
<dbReference type="PhylomeDB" id="Q54QM8"/>
<dbReference type="Reactome" id="R-DDI-156827">
    <property type="pathway name" value="L13a-mediated translational silencing of Ceruloplasmin expression"/>
</dbReference>
<dbReference type="Reactome" id="R-DDI-1799339">
    <property type="pathway name" value="SRP-dependent cotranslational protein targeting to membrane"/>
</dbReference>
<dbReference type="Reactome" id="R-DDI-72689">
    <property type="pathway name" value="Formation of a pool of free 40S subunits"/>
</dbReference>
<dbReference type="Reactome" id="R-DDI-72706">
    <property type="pathway name" value="GTP hydrolysis and joining of the 60S ribosomal subunit"/>
</dbReference>
<dbReference type="Reactome" id="R-DDI-975956">
    <property type="pathway name" value="Nonsense Mediated Decay (NMD) independent of the Exon Junction Complex (EJC)"/>
</dbReference>
<dbReference type="Reactome" id="R-DDI-975957">
    <property type="pathway name" value="Nonsense Mediated Decay (NMD) enhanced by the Exon Junction Complex (EJC)"/>
</dbReference>
<dbReference type="PRO" id="PR:Q54QM8"/>
<dbReference type="Proteomes" id="UP000002195">
    <property type="component" value="Chromosome 4"/>
</dbReference>
<dbReference type="GO" id="GO:0022625">
    <property type="term" value="C:cytosolic large ribosomal subunit"/>
    <property type="evidence" value="ECO:0000318"/>
    <property type="project" value="GO_Central"/>
</dbReference>
<dbReference type="GO" id="GO:0003723">
    <property type="term" value="F:RNA binding"/>
    <property type="evidence" value="ECO:0000318"/>
    <property type="project" value="GO_Central"/>
</dbReference>
<dbReference type="GO" id="GO:0003735">
    <property type="term" value="F:structural constituent of ribosome"/>
    <property type="evidence" value="ECO:0000318"/>
    <property type="project" value="GO_Central"/>
</dbReference>
<dbReference type="GO" id="GO:0002181">
    <property type="term" value="P:cytoplasmic translation"/>
    <property type="evidence" value="ECO:0000318"/>
    <property type="project" value="GO_Central"/>
</dbReference>
<dbReference type="GO" id="GO:0042273">
    <property type="term" value="P:ribosomal large subunit biogenesis"/>
    <property type="evidence" value="ECO:0000318"/>
    <property type="project" value="GO_Central"/>
</dbReference>
<dbReference type="CDD" id="cd06089">
    <property type="entry name" value="KOW_RPL26"/>
    <property type="match status" value="1"/>
</dbReference>
<dbReference type="FunFam" id="2.30.30.30:FF:000009">
    <property type="entry name" value="60S ribosomal protein L26"/>
    <property type="match status" value="1"/>
</dbReference>
<dbReference type="Gene3D" id="2.30.30.30">
    <property type="match status" value="1"/>
</dbReference>
<dbReference type="InterPro" id="IPR005824">
    <property type="entry name" value="KOW"/>
</dbReference>
<dbReference type="InterPro" id="IPR014722">
    <property type="entry name" value="Rib_uL2_dom2"/>
</dbReference>
<dbReference type="InterPro" id="IPR005825">
    <property type="entry name" value="Ribosomal_uL24_CS"/>
</dbReference>
<dbReference type="InterPro" id="IPR005756">
    <property type="entry name" value="Ribosomal_uL24_euk/arc"/>
</dbReference>
<dbReference type="InterPro" id="IPR041988">
    <property type="entry name" value="Ribosomal_uL24_KOW"/>
</dbReference>
<dbReference type="InterPro" id="IPR008991">
    <property type="entry name" value="Translation_prot_SH3-like_sf"/>
</dbReference>
<dbReference type="NCBIfam" id="TIGR01080">
    <property type="entry name" value="rplX_A_E"/>
    <property type="match status" value="1"/>
</dbReference>
<dbReference type="PANTHER" id="PTHR11143">
    <property type="entry name" value="60S RIBOSOMAL PROTEIN L26 FAMILY MEMBER"/>
    <property type="match status" value="1"/>
</dbReference>
<dbReference type="Pfam" id="PF16906">
    <property type="entry name" value="Ribosomal_L26"/>
    <property type="match status" value="1"/>
</dbReference>
<dbReference type="SMART" id="SM00739">
    <property type="entry name" value="KOW"/>
    <property type="match status" value="1"/>
</dbReference>
<dbReference type="SUPFAM" id="SSF50104">
    <property type="entry name" value="Translation proteins SH3-like domain"/>
    <property type="match status" value="1"/>
</dbReference>
<dbReference type="PROSITE" id="PS01108">
    <property type="entry name" value="RIBOSOMAL_L24"/>
    <property type="match status" value="1"/>
</dbReference>
<sequence length="139" mass="15658">MKRNTNVSSSRRKSRKAHFTASSGERRIRMSAALSHDLRTKYNVRSLPIRKDDEVRVVCGDNKNHEGKVVACYRKKYVIHIDKLTVTKTNGNTAQIGVSPSNVILTKLKLDKDRKALLERKNRTVAADKGKVKVSADVN</sequence>
<evidence type="ECO:0000256" key="1">
    <source>
        <dbReference type="SAM" id="MobiDB-lite"/>
    </source>
</evidence>
<evidence type="ECO:0000305" key="2"/>
<keyword id="KW-1185">Reference proteome</keyword>
<keyword id="KW-0687">Ribonucleoprotein</keyword>
<keyword id="KW-0689">Ribosomal protein</keyword>